<proteinExistence type="inferred from homology"/>
<protein>
    <recommendedName>
        <fullName evidence="1">5-deoxyribose 1-phosphate isomerase</fullName>
        <ecNumber evidence="1">5.3.1.-</ecNumber>
    </recommendedName>
</protein>
<gene>
    <name evidence="1" type="primary">drdI</name>
    <name type="ordered locus">BT9727_0316</name>
</gene>
<accession>Q6HP54</accession>
<feature type="chain" id="PRO_0000357153" description="5-deoxyribose 1-phosphate isomerase">
    <location>
        <begin position="1"/>
        <end position="347"/>
    </location>
</feature>
<feature type="active site" description="Proton donor" evidence="1">
    <location>
        <position position="239"/>
    </location>
</feature>
<feature type="binding site" evidence="1">
    <location>
        <begin position="48"/>
        <end position="50"/>
    </location>
    <ligand>
        <name>substrate</name>
    </ligand>
</feature>
<feature type="binding site" evidence="1">
    <location>
        <position position="91"/>
    </location>
    <ligand>
        <name>substrate</name>
    </ligand>
</feature>
<feature type="binding site" evidence="1">
    <location>
        <position position="198"/>
    </location>
    <ligand>
        <name>substrate</name>
    </ligand>
</feature>
<feature type="binding site" evidence="1">
    <location>
        <begin position="249"/>
        <end position="250"/>
    </location>
    <ligand>
        <name>substrate</name>
    </ligand>
</feature>
<feature type="site" description="Transition state stabilizer" evidence="1">
    <location>
        <position position="159"/>
    </location>
</feature>
<comment type="function">
    <text evidence="1">Catalyzes the isomerization of 5-deoxy-alpha-D-ribose 1-phosphate to 5-deoxy-D-ribulose 1-phosphate, as part of a 5-deoxyribose salvage pathway that recycles this toxic radical SAM enzyme by-product to mainstream metabolites.</text>
</comment>
<comment type="catalytic activity">
    <reaction evidence="1">
        <text>5-deoxy-alpha-D-ribose 1-phosphate = 5-deoxy-D-ribulose 1-phosphate</text>
        <dbReference type="Rhea" id="RHEA:61296"/>
        <dbReference type="ChEBI" id="CHEBI:58749"/>
        <dbReference type="ChEBI" id="CHEBI:144504"/>
    </reaction>
    <physiologicalReaction direction="left-to-right" evidence="1">
        <dbReference type="Rhea" id="RHEA:61297"/>
    </physiologicalReaction>
</comment>
<comment type="pathway">
    <text evidence="1">Carbohydrate degradation.</text>
</comment>
<comment type="similarity">
    <text evidence="1">Belongs to the EIF-2B alpha/beta/delta subunits family. DrdI subfamily.</text>
</comment>
<comment type="sequence caution" evidence="2">
    <conflict type="erroneous initiation">
        <sequence resource="EMBL-CDS" id="AAT62266"/>
    </conflict>
</comment>
<keyword id="KW-0119">Carbohydrate metabolism</keyword>
<keyword id="KW-0413">Isomerase</keyword>
<reference key="1">
    <citation type="journal article" date="2006" name="J. Bacteriol.">
        <title>Pathogenomic sequence analysis of Bacillus cereus and Bacillus thuringiensis isolates closely related to Bacillus anthracis.</title>
        <authorList>
            <person name="Han C.S."/>
            <person name="Xie G."/>
            <person name="Challacombe J.F."/>
            <person name="Altherr M.R."/>
            <person name="Bhotika S.S."/>
            <person name="Bruce D."/>
            <person name="Campbell C.S."/>
            <person name="Campbell M.L."/>
            <person name="Chen J."/>
            <person name="Chertkov O."/>
            <person name="Cleland C."/>
            <person name="Dimitrijevic M."/>
            <person name="Doggett N.A."/>
            <person name="Fawcett J.J."/>
            <person name="Glavina T."/>
            <person name="Goodwin L.A."/>
            <person name="Hill K.K."/>
            <person name="Hitchcock P."/>
            <person name="Jackson P.J."/>
            <person name="Keim P."/>
            <person name="Kewalramani A.R."/>
            <person name="Longmire J."/>
            <person name="Lucas S."/>
            <person name="Malfatti S."/>
            <person name="McMurry K."/>
            <person name="Meincke L.J."/>
            <person name="Misra M."/>
            <person name="Moseman B.L."/>
            <person name="Mundt M."/>
            <person name="Munk A.C."/>
            <person name="Okinaka R.T."/>
            <person name="Parson-Quintana B."/>
            <person name="Reilly L.P."/>
            <person name="Richardson P."/>
            <person name="Robinson D.L."/>
            <person name="Rubin E."/>
            <person name="Saunders E."/>
            <person name="Tapia R."/>
            <person name="Tesmer J.G."/>
            <person name="Thayer N."/>
            <person name="Thompson L.S."/>
            <person name="Tice H."/>
            <person name="Ticknor L.O."/>
            <person name="Wills P.L."/>
            <person name="Brettin T.S."/>
            <person name="Gilna P."/>
        </authorList>
    </citation>
    <scope>NUCLEOTIDE SEQUENCE [LARGE SCALE GENOMIC DNA]</scope>
    <source>
        <strain>97-27</strain>
    </source>
</reference>
<dbReference type="EC" id="5.3.1.-" evidence="1"/>
<dbReference type="EMBL" id="AE017355">
    <property type="protein sequence ID" value="AAT62266.1"/>
    <property type="status" value="ALT_INIT"/>
    <property type="molecule type" value="Genomic_DNA"/>
</dbReference>
<dbReference type="RefSeq" id="YP_034666.1">
    <property type="nucleotide sequence ID" value="NC_005957.1"/>
</dbReference>
<dbReference type="SMR" id="Q6HP54"/>
<dbReference type="KEGG" id="btk:BT9727_0316"/>
<dbReference type="PATRIC" id="fig|281309.8.peg.336"/>
<dbReference type="HOGENOM" id="CLU_016218_1_2_9"/>
<dbReference type="Proteomes" id="UP000001301">
    <property type="component" value="Chromosome"/>
</dbReference>
<dbReference type="GO" id="GO:0046523">
    <property type="term" value="F:S-methyl-5-thioribose-1-phosphate isomerase activity"/>
    <property type="evidence" value="ECO:0007669"/>
    <property type="project" value="InterPro"/>
</dbReference>
<dbReference type="GO" id="GO:0019509">
    <property type="term" value="P:L-methionine salvage from methylthioadenosine"/>
    <property type="evidence" value="ECO:0007669"/>
    <property type="project" value="TreeGrafter"/>
</dbReference>
<dbReference type="GO" id="GO:0019323">
    <property type="term" value="P:pentose catabolic process"/>
    <property type="evidence" value="ECO:0007669"/>
    <property type="project" value="UniProtKB-UniRule"/>
</dbReference>
<dbReference type="FunFam" id="1.20.120.420:FF:000001">
    <property type="entry name" value="Methylthioribose-1-phosphate isomerase"/>
    <property type="match status" value="1"/>
</dbReference>
<dbReference type="FunFam" id="3.40.50.10470:FF:000006">
    <property type="entry name" value="Methylthioribose-1-phosphate isomerase"/>
    <property type="match status" value="1"/>
</dbReference>
<dbReference type="Gene3D" id="1.20.120.420">
    <property type="entry name" value="translation initiation factor eif-2b, domain 1"/>
    <property type="match status" value="1"/>
</dbReference>
<dbReference type="Gene3D" id="3.40.50.10470">
    <property type="entry name" value="Translation initiation factor eif-2b, domain 2"/>
    <property type="match status" value="1"/>
</dbReference>
<dbReference type="HAMAP" id="MF_02229">
    <property type="entry name" value="Deoxyribose1P_isomerase"/>
    <property type="match status" value="1"/>
</dbReference>
<dbReference type="HAMAP" id="MF_01678">
    <property type="entry name" value="Salvage_MtnA"/>
    <property type="match status" value="1"/>
</dbReference>
<dbReference type="InterPro" id="IPR043679">
    <property type="entry name" value="Deoxyribose1P_isomerase_DrdI"/>
</dbReference>
<dbReference type="InterPro" id="IPR000649">
    <property type="entry name" value="IF-2B-related"/>
</dbReference>
<dbReference type="InterPro" id="IPR005251">
    <property type="entry name" value="IF-M1Pi"/>
</dbReference>
<dbReference type="InterPro" id="IPR042529">
    <property type="entry name" value="IF_2B-like_C"/>
</dbReference>
<dbReference type="InterPro" id="IPR011559">
    <property type="entry name" value="Initiation_fac_2B_a/b/d"/>
</dbReference>
<dbReference type="InterPro" id="IPR027363">
    <property type="entry name" value="M1Pi_N"/>
</dbReference>
<dbReference type="InterPro" id="IPR037171">
    <property type="entry name" value="NagB/RpiA_transferase-like"/>
</dbReference>
<dbReference type="NCBIfam" id="TIGR00524">
    <property type="entry name" value="eIF-2B_rel"/>
    <property type="match status" value="1"/>
</dbReference>
<dbReference type="NCBIfam" id="NF004326">
    <property type="entry name" value="PRK05720.1"/>
    <property type="match status" value="1"/>
</dbReference>
<dbReference type="NCBIfam" id="TIGR00512">
    <property type="entry name" value="salvage_mtnA"/>
    <property type="match status" value="1"/>
</dbReference>
<dbReference type="PANTHER" id="PTHR43475">
    <property type="entry name" value="METHYLTHIORIBOSE-1-PHOSPHATE ISOMERASE"/>
    <property type="match status" value="1"/>
</dbReference>
<dbReference type="PANTHER" id="PTHR43475:SF1">
    <property type="entry name" value="METHYLTHIORIBOSE-1-PHOSPHATE ISOMERASE"/>
    <property type="match status" value="1"/>
</dbReference>
<dbReference type="Pfam" id="PF01008">
    <property type="entry name" value="IF-2B"/>
    <property type="match status" value="1"/>
</dbReference>
<dbReference type="SUPFAM" id="SSF100950">
    <property type="entry name" value="NagB/RpiA/CoA transferase-like"/>
    <property type="match status" value="1"/>
</dbReference>
<evidence type="ECO:0000255" key="1">
    <source>
        <dbReference type="HAMAP-Rule" id="MF_02229"/>
    </source>
</evidence>
<evidence type="ECO:0000305" key="2"/>
<organism>
    <name type="scientific">Bacillus thuringiensis subsp. konkukian (strain 97-27)</name>
    <dbReference type="NCBI Taxonomy" id="281309"/>
    <lineage>
        <taxon>Bacteria</taxon>
        <taxon>Bacillati</taxon>
        <taxon>Bacillota</taxon>
        <taxon>Bacilli</taxon>
        <taxon>Bacillales</taxon>
        <taxon>Bacillaceae</taxon>
        <taxon>Bacillus</taxon>
        <taxon>Bacillus cereus group</taxon>
    </lineage>
</organism>
<sequence>MEEQLIPIQWKDDALVLLDQTLLPNEVVYESFNTAEGVWDAIQVMKVRGAPAIGVSAAYGVYLGVKEFVESTEAEFIDEVKRVCAYLATSRPTAVNLFWALERMESVATDHTHLSITQLKDRLLEEAKEIHREDEEINRQIGEHALTLFHDGMGVLTHCNAGALATTKYGTATAPMYLAKEKGWDLKIYSDETRPRLQGSTLTALELQRAGIDVTVITDNMAAMVMSQGKIDAVIVGCDRVAANGDVANKIGTLGVSILAKYYNIPFYVAAPTPTIDLKTPTGKEIPIEERDASEVINRFGQYSAPKESKVYNPAFDVTPHENVIAIITEKGIVKAPFTENLKNLFQ</sequence>
<name>DRDI_BACHK</name>